<accession>P83364</accession>
<protein>
    <recommendedName>
        <fullName>Protein PR-L2</fullName>
    </recommendedName>
</protein>
<organism evidence="4">
    <name type="scientific">Lupinus luteus</name>
    <name type="common">European yellow lupine</name>
    <dbReference type="NCBI Taxonomy" id="3873"/>
    <lineage>
        <taxon>Eukaryota</taxon>
        <taxon>Viridiplantae</taxon>
        <taxon>Streptophyta</taxon>
        <taxon>Embryophyta</taxon>
        <taxon>Tracheophyta</taxon>
        <taxon>Spermatophyta</taxon>
        <taxon>Magnoliopsida</taxon>
        <taxon>eudicotyledons</taxon>
        <taxon>Gunneridae</taxon>
        <taxon>Pentapetalae</taxon>
        <taxon>rosids</taxon>
        <taxon>fabids</taxon>
        <taxon>Fabales</taxon>
        <taxon>Fabaceae</taxon>
        <taxon>Papilionoideae</taxon>
        <taxon>50 kb inversion clade</taxon>
        <taxon>genistoids sensu lato</taxon>
        <taxon>core genistoids</taxon>
        <taxon>Genisteae</taxon>
        <taxon>Lupinus</taxon>
    </lineage>
</organism>
<reference evidence="4" key="1">
    <citation type="journal article" date="1999" name="J. Plant Physiol.">
        <title>Heavy metal-induced polypeptides in lupin roots are similar to pathogenesis-related proteins.</title>
        <authorList>
            <person name="Przymusinski R."/>
            <person name="Gwozdz E.A."/>
        </authorList>
    </citation>
    <scope>PROTEIN SEQUENCE</scope>
    <scope>INDUCTION</scope>
    <source>
        <strain>cv. Ventus</strain>
        <tissue>Root tip</tissue>
    </source>
</reference>
<name>PL2_LUPLU</name>
<evidence type="ECO:0000256" key="1">
    <source>
        <dbReference type="SAM" id="MobiDB-lite"/>
    </source>
</evidence>
<evidence type="ECO:0000269" key="2">
    <source ref="1"/>
</evidence>
<evidence type="ECO:0000303" key="3">
    <source ref="1"/>
</evidence>
<evidence type="ECO:0000305" key="4"/>
<dbReference type="GO" id="GO:0006952">
    <property type="term" value="P:defense response"/>
    <property type="evidence" value="ECO:0007669"/>
    <property type="project" value="UniProtKB-KW"/>
</dbReference>
<sequence>SVFAFENEQSSTIAPARLYK</sequence>
<feature type="chain" id="PRO_0000154195" description="Protein PR-L2">
    <location>
        <begin position="1"/>
        <end position="20" status="greater than"/>
    </location>
</feature>
<feature type="region of interest" description="Disordered" evidence="1">
    <location>
        <begin position="1"/>
        <end position="20"/>
    </location>
</feature>
<feature type="non-terminal residue" evidence="3">
    <location>
        <position position="20"/>
    </location>
</feature>
<proteinExistence type="evidence at protein level"/>
<keyword id="KW-0903">Direct protein sequencing</keyword>
<keyword id="KW-0568">Pathogenesis-related protein</keyword>
<keyword id="KW-0611">Plant defense</keyword>
<comment type="induction">
    <text evidence="2">By heavy metal ions.</text>
</comment>
<comment type="similarity">
    <text evidence="4">Belongs to the BetVI family.</text>
</comment>